<evidence type="ECO:0000250" key="1"/>
<evidence type="ECO:0000255" key="2">
    <source>
        <dbReference type="PROSITE-ProRule" id="PRU00176"/>
    </source>
</evidence>
<evidence type="ECO:0000256" key="3">
    <source>
        <dbReference type="SAM" id="MobiDB-lite"/>
    </source>
</evidence>
<evidence type="ECO:0000305" key="4"/>
<protein>
    <recommendedName>
        <fullName>U1 small nuclear ribonucleoprotein A</fullName>
        <shortName>U1 snRNP protein A</shortName>
    </recommendedName>
</protein>
<organism>
    <name type="scientific">Oryza sativa subsp. japonica</name>
    <name type="common">Rice</name>
    <dbReference type="NCBI Taxonomy" id="39947"/>
    <lineage>
        <taxon>Eukaryota</taxon>
        <taxon>Viridiplantae</taxon>
        <taxon>Streptophyta</taxon>
        <taxon>Embryophyta</taxon>
        <taxon>Tracheophyta</taxon>
        <taxon>Spermatophyta</taxon>
        <taxon>Magnoliopsida</taxon>
        <taxon>Liliopsida</taxon>
        <taxon>Poales</taxon>
        <taxon>Poaceae</taxon>
        <taxon>BOP clade</taxon>
        <taxon>Oryzoideae</taxon>
        <taxon>Oryzeae</taxon>
        <taxon>Oryzinae</taxon>
        <taxon>Oryza</taxon>
        <taxon>Oryza sativa</taxon>
    </lineage>
</organism>
<accession>Q0DKM4</accession>
<accession>A0A0P0WI32</accession>
<comment type="function">
    <text evidence="1">Involved in nuclear pre-mRNA splicing.</text>
</comment>
<comment type="subunit">
    <text evidence="1">Component of the spliceosome where it is associated with snRNP U1.</text>
</comment>
<comment type="subcellular location">
    <subcellularLocation>
        <location evidence="1">Nucleus</location>
        <location evidence="1">Nucleolus</location>
    </subcellularLocation>
</comment>
<comment type="similarity">
    <text evidence="4">Belongs to the RRM U1 A/B'' family.</text>
</comment>
<reference key="1">
    <citation type="journal article" date="2005" name="Nature">
        <title>The map-based sequence of the rice genome.</title>
        <authorList>
            <consortium name="International rice genome sequencing project (IRGSP)"/>
        </authorList>
    </citation>
    <scope>NUCLEOTIDE SEQUENCE [LARGE SCALE GENOMIC DNA]</scope>
    <source>
        <strain>cv. Nipponbare</strain>
    </source>
</reference>
<reference key="2">
    <citation type="journal article" date="2008" name="Nucleic Acids Res.">
        <title>The rice annotation project database (RAP-DB): 2008 update.</title>
        <authorList>
            <consortium name="The rice annotation project (RAP)"/>
        </authorList>
    </citation>
    <scope>GENOME REANNOTATION</scope>
    <source>
        <strain>cv. Nipponbare</strain>
    </source>
</reference>
<reference key="3">
    <citation type="journal article" date="2013" name="Rice">
        <title>Improvement of the Oryza sativa Nipponbare reference genome using next generation sequence and optical map data.</title>
        <authorList>
            <person name="Kawahara Y."/>
            <person name="de la Bastide M."/>
            <person name="Hamilton J.P."/>
            <person name="Kanamori H."/>
            <person name="McCombie W.R."/>
            <person name="Ouyang S."/>
            <person name="Schwartz D.C."/>
            <person name="Tanaka T."/>
            <person name="Wu J."/>
            <person name="Zhou S."/>
            <person name="Childs K.L."/>
            <person name="Davidson R.M."/>
            <person name="Lin H."/>
            <person name="Quesada-Ocampo L."/>
            <person name="Vaillancourt B."/>
            <person name="Sakai H."/>
            <person name="Lee S.S."/>
            <person name="Kim J."/>
            <person name="Numa H."/>
            <person name="Itoh T."/>
            <person name="Buell C.R."/>
            <person name="Matsumoto T."/>
        </authorList>
    </citation>
    <scope>GENOME REANNOTATION</scope>
    <source>
        <strain>cv. Nipponbare</strain>
    </source>
</reference>
<reference key="4">
    <citation type="journal article" date="2005" name="PLoS Biol.">
        <title>The genomes of Oryza sativa: a history of duplications.</title>
        <authorList>
            <person name="Yu J."/>
            <person name="Wang J."/>
            <person name="Lin W."/>
            <person name="Li S."/>
            <person name="Li H."/>
            <person name="Zhou J."/>
            <person name="Ni P."/>
            <person name="Dong W."/>
            <person name="Hu S."/>
            <person name="Zeng C."/>
            <person name="Zhang J."/>
            <person name="Zhang Y."/>
            <person name="Li R."/>
            <person name="Xu Z."/>
            <person name="Li S."/>
            <person name="Li X."/>
            <person name="Zheng H."/>
            <person name="Cong L."/>
            <person name="Lin L."/>
            <person name="Yin J."/>
            <person name="Geng J."/>
            <person name="Li G."/>
            <person name="Shi J."/>
            <person name="Liu J."/>
            <person name="Lv H."/>
            <person name="Li J."/>
            <person name="Wang J."/>
            <person name="Deng Y."/>
            <person name="Ran L."/>
            <person name="Shi X."/>
            <person name="Wang X."/>
            <person name="Wu Q."/>
            <person name="Li C."/>
            <person name="Ren X."/>
            <person name="Wang J."/>
            <person name="Wang X."/>
            <person name="Li D."/>
            <person name="Liu D."/>
            <person name="Zhang X."/>
            <person name="Ji Z."/>
            <person name="Zhao W."/>
            <person name="Sun Y."/>
            <person name="Zhang Z."/>
            <person name="Bao J."/>
            <person name="Han Y."/>
            <person name="Dong L."/>
            <person name="Ji J."/>
            <person name="Chen P."/>
            <person name="Wu S."/>
            <person name="Liu J."/>
            <person name="Xiao Y."/>
            <person name="Bu D."/>
            <person name="Tan J."/>
            <person name="Yang L."/>
            <person name="Ye C."/>
            <person name="Zhang J."/>
            <person name="Xu J."/>
            <person name="Zhou Y."/>
            <person name="Yu Y."/>
            <person name="Zhang B."/>
            <person name="Zhuang S."/>
            <person name="Wei H."/>
            <person name="Liu B."/>
            <person name="Lei M."/>
            <person name="Yu H."/>
            <person name="Li Y."/>
            <person name="Xu H."/>
            <person name="Wei S."/>
            <person name="He X."/>
            <person name="Fang L."/>
            <person name="Zhang Z."/>
            <person name="Zhang Y."/>
            <person name="Huang X."/>
            <person name="Su Z."/>
            <person name="Tong W."/>
            <person name="Li J."/>
            <person name="Tong Z."/>
            <person name="Li S."/>
            <person name="Ye J."/>
            <person name="Wang L."/>
            <person name="Fang L."/>
            <person name="Lei T."/>
            <person name="Chen C.-S."/>
            <person name="Chen H.-C."/>
            <person name="Xu Z."/>
            <person name="Li H."/>
            <person name="Huang H."/>
            <person name="Zhang F."/>
            <person name="Xu H."/>
            <person name="Li N."/>
            <person name="Zhao C."/>
            <person name="Li S."/>
            <person name="Dong L."/>
            <person name="Huang Y."/>
            <person name="Li L."/>
            <person name="Xi Y."/>
            <person name="Qi Q."/>
            <person name="Li W."/>
            <person name="Zhang B."/>
            <person name="Hu W."/>
            <person name="Zhang Y."/>
            <person name="Tian X."/>
            <person name="Jiao Y."/>
            <person name="Liang X."/>
            <person name="Jin J."/>
            <person name="Gao L."/>
            <person name="Zheng W."/>
            <person name="Hao B."/>
            <person name="Liu S.-M."/>
            <person name="Wang W."/>
            <person name="Yuan L."/>
            <person name="Cao M."/>
            <person name="McDermott J."/>
            <person name="Samudrala R."/>
            <person name="Wang J."/>
            <person name="Wong G.K.-S."/>
            <person name="Yang H."/>
        </authorList>
    </citation>
    <scope>NUCLEOTIDE SEQUENCE [LARGE SCALE GENOMIC DNA]</scope>
    <source>
        <strain>cv. Nipponbare</strain>
    </source>
</reference>
<feature type="chain" id="PRO_0000416927" description="U1 small nuclear ribonucleoprotein A">
    <location>
        <begin position="1"/>
        <end position="253"/>
    </location>
</feature>
<feature type="domain" description="RRM 1" evidence="2">
    <location>
        <begin position="23"/>
        <end position="102"/>
    </location>
</feature>
<feature type="domain" description="RRM 2" evidence="2">
    <location>
        <begin position="179"/>
        <end position="253"/>
    </location>
</feature>
<feature type="region of interest" description="Disordered" evidence="3">
    <location>
        <begin position="111"/>
        <end position="140"/>
    </location>
</feature>
<keyword id="KW-0507">mRNA processing</keyword>
<keyword id="KW-0508">mRNA splicing</keyword>
<keyword id="KW-0539">Nucleus</keyword>
<keyword id="KW-1185">Reference proteome</keyword>
<keyword id="KW-0677">Repeat</keyword>
<keyword id="KW-0687">Ribonucleoprotein</keyword>
<keyword id="KW-0694">RNA-binding</keyword>
<keyword id="KW-0747">Spliceosome</keyword>
<gene>
    <name type="ordered locus">Os05g0154800</name>
    <name type="ordered locus">LOC_Os05g06280</name>
    <name type="ORF">OsJ_17170</name>
</gene>
<proteinExistence type="inferred from homology"/>
<name>RU1A_ORYSJ</name>
<sequence>MSGEVAAAVGGGAPEENGAPPNVTIYINNLNEKIKLEELKKSLRAVFSQFGKILDVLAFKTLKHKGQAWVVFEDVASATEALKSMQDFPFHNKPMRIQYAKTKSDIIAKADGTFVPRERRKRNDEKPEKKQKREQHHDVSQVGLGVNAYPGVYGAPPLSQLPFAGAQKVMMPEIIVPNNILFVQNLPHETTPMMLQMLFCQYPGFKEVRMVEAKPGIAFVEYGDEGQATAAMNHLQGFKITKDNQMLISYAKK</sequence>
<dbReference type="EMBL" id="AP008211">
    <property type="protein sequence ID" value="BAF16599.1"/>
    <property type="molecule type" value="Genomic_DNA"/>
</dbReference>
<dbReference type="EMBL" id="AP014961">
    <property type="protein sequence ID" value="BAS92346.1"/>
    <property type="molecule type" value="Genomic_DNA"/>
</dbReference>
<dbReference type="EMBL" id="CM000142">
    <property type="protein sequence ID" value="EEE62381.1"/>
    <property type="molecule type" value="Genomic_DNA"/>
</dbReference>
<dbReference type="RefSeq" id="XP_015640775.1">
    <property type="nucleotide sequence ID" value="XM_015785289.1"/>
</dbReference>
<dbReference type="SMR" id="Q0DKM4"/>
<dbReference type="FunCoup" id="Q0DKM4">
    <property type="interactions" value="3038"/>
</dbReference>
<dbReference type="STRING" id="39947.Q0DKM4"/>
<dbReference type="PaxDb" id="39947-Q0DKM4"/>
<dbReference type="EnsemblPlants" id="Os05t0154800-01">
    <property type="protein sequence ID" value="Os05t0154800-01"/>
    <property type="gene ID" value="Os05g0154800"/>
</dbReference>
<dbReference type="Gramene" id="Os05t0154800-01">
    <property type="protein sequence ID" value="Os05t0154800-01"/>
    <property type="gene ID" value="Os05g0154800"/>
</dbReference>
<dbReference type="KEGG" id="dosa:Os05g0154800"/>
<dbReference type="eggNOG" id="KOG4206">
    <property type="taxonomic scope" value="Eukaryota"/>
</dbReference>
<dbReference type="HOGENOM" id="CLU_041869_1_1_1"/>
<dbReference type="InParanoid" id="Q0DKM4"/>
<dbReference type="OMA" id="LKKGWVM"/>
<dbReference type="OrthoDB" id="277802at2759"/>
<dbReference type="Proteomes" id="UP000000763">
    <property type="component" value="Chromosome 5"/>
</dbReference>
<dbReference type="Proteomes" id="UP000007752">
    <property type="component" value="Chromosome 5"/>
</dbReference>
<dbReference type="Proteomes" id="UP000059680">
    <property type="component" value="Chromosome 5"/>
</dbReference>
<dbReference type="GO" id="GO:0005730">
    <property type="term" value="C:nucleolus"/>
    <property type="evidence" value="ECO:0007669"/>
    <property type="project" value="UniProtKB-SubCell"/>
</dbReference>
<dbReference type="GO" id="GO:0005681">
    <property type="term" value="C:spliceosomal complex"/>
    <property type="evidence" value="ECO:0007669"/>
    <property type="project" value="UniProtKB-KW"/>
</dbReference>
<dbReference type="GO" id="GO:0005685">
    <property type="term" value="C:U1 snRNP"/>
    <property type="evidence" value="ECO:0000250"/>
    <property type="project" value="UniProtKB"/>
</dbReference>
<dbReference type="GO" id="GO:0030619">
    <property type="term" value="F:U1 snRNA binding"/>
    <property type="evidence" value="ECO:0000318"/>
    <property type="project" value="GO_Central"/>
</dbReference>
<dbReference type="GO" id="GO:0000398">
    <property type="term" value="P:mRNA splicing, via spliceosome"/>
    <property type="evidence" value="ECO:0000318"/>
    <property type="project" value="GO_Central"/>
</dbReference>
<dbReference type="CDD" id="cd12246">
    <property type="entry name" value="RRM1_U1A_like"/>
    <property type="match status" value="1"/>
</dbReference>
<dbReference type="CDD" id="cd12247">
    <property type="entry name" value="RRM2_U1A_like"/>
    <property type="match status" value="1"/>
</dbReference>
<dbReference type="FunFam" id="3.30.70.330:FF:000039">
    <property type="entry name" value="U1 small nuclear ribonucleoprotein A"/>
    <property type="match status" value="1"/>
</dbReference>
<dbReference type="FunFam" id="3.30.70.330:FF:000029">
    <property type="entry name" value="U2 small nuclear ribonucleoprotein B"/>
    <property type="match status" value="1"/>
</dbReference>
<dbReference type="Gene3D" id="3.30.70.330">
    <property type="match status" value="2"/>
</dbReference>
<dbReference type="InterPro" id="IPR012677">
    <property type="entry name" value="Nucleotide-bd_a/b_plait_sf"/>
</dbReference>
<dbReference type="InterPro" id="IPR035979">
    <property type="entry name" value="RBD_domain_sf"/>
</dbReference>
<dbReference type="InterPro" id="IPR000504">
    <property type="entry name" value="RRM_dom"/>
</dbReference>
<dbReference type="PANTHER" id="PTHR10501">
    <property type="entry name" value="U1 SMALL NUCLEAR RIBONUCLEOPROTEIN A/U2 SMALL NUCLEAR RIBONUCLEOPROTEIN B"/>
    <property type="match status" value="1"/>
</dbReference>
<dbReference type="Pfam" id="PF00076">
    <property type="entry name" value="RRM_1"/>
    <property type="match status" value="2"/>
</dbReference>
<dbReference type="SMART" id="SM00360">
    <property type="entry name" value="RRM"/>
    <property type="match status" value="2"/>
</dbReference>
<dbReference type="SUPFAM" id="SSF54928">
    <property type="entry name" value="RNA-binding domain, RBD"/>
    <property type="match status" value="1"/>
</dbReference>
<dbReference type="PROSITE" id="PS50102">
    <property type="entry name" value="RRM"/>
    <property type="match status" value="2"/>
</dbReference>